<sequence length="201" mass="23196">MKLIVSVFLIGCQFLNILGERQCITMIPKLCFNNNYSGNTTLDKWRTVMQFTYGDVEPNIIIPNGFVEGSNRCMNVEATTVCFSEPPLSNPELLSETWTMTDLYFKMPRSWWIFEIGKPRVCANVENMVCFAVSDDEGTHQWSFKVNMLYGNVVPKLGPPNKRVRNYCMKVDESKICFSEQPLLDDFSNKSWKLNKILFNV</sequence>
<reference key="1">
    <citation type="journal article" date="2001" name="Virology">
        <title>Analysis of the first complete DNA sequence of an invertebrate iridovirus: coding strategy of the genome of Chilo iridescent virus.</title>
        <authorList>
            <person name="Jakob N.J."/>
            <person name="Mueller K."/>
            <person name="Bahr U."/>
            <person name="Darai G."/>
        </authorList>
    </citation>
    <scope>NUCLEOTIDE SEQUENCE [LARGE SCALE GENOMIC DNA]</scope>
</reference>
<reference key="2">
    <citation type="journal article" date="2007" name="Virol. J.">
        <title>Comparative genomic analysis of the family Iridoviridae: re-annotating and defining the core set of iridovirus genes.</title>
        <authorList>
            <person name="Eaton H.E."/>
            <person name="Metcalf J."/>
            <person name="Penny E."/>
            <person name="Tcherepanov V."/>
            <person name="Upton C."/>
            <person name="Brunetti C.R."/>
        </authorList>
    </citation>
    <scope>GENOME REANNOTATION</scope>
</reference>
<protein>
    <recommendedName>
        <fullName>Uncharacterized protein 130R</fullName>
    </recommendedName>
</protein>
<organismHost>
    <name type="scientific">Acheta domesticus</name>
    <name type="common">House cricket</name>
    <dbReference type="NCBI Taxonomy" id="6997"/>
</organismHost>
<organismHost>
    <name type="scientific">Chilo suppressalis</name>
    <name type="common">Asiatic rice borer moth</name>
    <dbReference type="NCBI Taxonomy" id="168631"/>
</organismHost>
<organismHost>
    <name type="scientific">Gryllus bimaculatus</name>
    <name type="common">Two-spotted cricket</name>
    <dbReference type="NCBI Taxonomy" id="6999"/>
</organismHost>
<organismHost>
    <name type="scientific">Gryllus campestris</name>
    <dbReference type="NCBI Taxonomy" id="58607"/>
</organismHost>
<organismHost>
    <name type="scientific">Spodoptera frugiperda</name>
    <name type="common">Fall armyworm</name>
    <dbReference type="NCBI Taxonomy" id="7108"/>
</organismHost>
<gene>
    <name type="ORF">IIV6-130R</name>
</gene>
<name>130R_IIV6</name>
<keyword id="KW-1185">Reference proteome</keyword>
<keyword id="KW-0732">Signal</keyword>
<accession>O55740</accession>
<organism>
    <name type="scientific">Invertebrate iridescent virus 6</name>
    <name type="common">IIV-6</name>
    <name type="synonym">Chilo iridescent virus</name>
    <dbReference type="NCBI Taxonomy" id="176652"/>
    <lineage>
        <taxon>Viruses</taxon>
        <taxon>Varidnaviria</taxon>
        <taxon>Bamfordvirae</taxon>
        <taxon>Nucleocytoviricota</taxon>
        <taxon>Megaviricetes</taxon>
        <taxon>Pimascovirales</taxon>
        <taxon>Iridoviridae</taxon>
        <taxon>Betairidovirinae</taxon>
        <taxon>Iridovirus</taxon>
    </lineage>
</organism>
<proteinExistence type="inferred from homology"/>
<evidence type="ECO:0000255" key="1"/>
<feature type="signal peptide" evidence="1">
    <location>
        <begin position="1"/>
        <end position="19"/>
    </location>
</feature>
<feature type="chain" id="PRO_0000378002" description="Uncharacterized protein 130R">
    <location>
        <begin position="20"/>
        <end position="201"/>
    </location>
</feature>
<dbReference type="EMBL" id="AF303741">
    <property type="protein sequence ID" value="AAB94451.1"/>
    <property type="molecule type" value="Genomic_DNA"/>
</dbReference>
<dbReference type="PIR" id="T03077">
    <property type="entry name" value="T03077"/>
</dbReference>
<dbReference type="RefSeq" id="NP_149593.1">
    <property type="nucleotide sequence ID" value="NC_003038.1"/>
</dbReference>
<dbReference type="KEGG" id="vg:1733000"/>
<dbReference type="Proteomes" id="UP000001359">
    <property type="component" value="Genome"/>
</dbReference>